<gene>
    <name evidence="1" type="primary">pth</name>
    <name type="ordered locus">Bcen2424_2804</name>
</gene>
<evidence type="ECO:0000255" key="1">
    <source>
        <dbReference type="HAMAP-Rule" id="MF_00083"/>
    </source>
</evidence>
<comment type="function">
    <text evidence="1">Hydrolyzes ribosome-free peptidyl-tRNAs (with 1 or more amino acids incorporated), which drop off the ribosome during protein synthesis, or as a result of ribosome stalling.</text>
</comment>
<comment type="function">
    <text evidence="1">Catalyzes the release of premature peptidyl moieties from peptidyl-tRNA molecules trapped in stalled 50S ribosomal subunits, and thus maintains levels of free tRNAs and 50S ribosomes.</text>
</comment>
<comment type="catalytic activity">
    <reaction evidence="1">
        <text>an N-acyl-L-alpha-aminoacyl-tRNA + H2O = an N-acyl-L-amino acid + a tRNA + H(+)</text>
        <dbReference type="Rhea" id="RHEA:54448"/>
        <dbReference type="Rhea" id="RHEA-COMP:10123"/>
        <dbReference type="Rhea" id="RHEA-COMP:13883"/>
        <dbReference type="ChEBI" id="CHEBI:15377"/>
        <dbReference type="ChEBI" id="CHEBI:15378"/>
        <dbReference type="ChEBI" id="CHEBI:59874"/>
        <dbReference type="ChEBI" id="CHEBI:78442"/>
        <dbReference type="ChEBI" id="CHEBI:138191"/>
        <dbReference type="EC" id="3.1.1.29"/>
    </reaction>
</comment>
<comment type="subunit">
    <text evidence="1">Monomer.</text>
</comment>
<comment type="subcellular location">
    <subcellularLocation>
        <location evidence="1">Cytoplasm</location>
    </subcellularLocation>
</comment>
<comment type="similarity">
    <text evidence="1">Belongs to the PTH family.</text>
</comment>
<reference key="1">
    <citation type="submission" date="2006-08" db="EMBL/GenBank/DDBJ databases">
        <title>Complete sequence of chromosome 1 of Burkholderia cenocepacia HI2424.</title>
        <authorList>
            <person name="Copeland A."/>
            <person name="Lucas S."/>
            <person name="Lapidus A."/>
            <person name="Barry K."/>
            <person name="Detter J.C."/>
            <person name="Glavina del Rio T."/>
            <person name="Hammon N."/>
            <person name="Israni S."/>
            <person name="Pitluck S."/>
            <person name="Chain P."/>
            <person name="Malfatti S."/>
            <person name="Shin M."/>
            <person name="Vergez L."/>
            <person name="Schmutz J."/>
            <person name="Larimer F."/>
            <person name="Land M."/>
            <person name="Hauser L."/>
            <person name="Kyrpides N."/>
            <person name="Kim E."/>
            <person name="LiPuma J.J."/>
            <person name="Gonzalez C.F."/>
            <person name="Konstantinidis K."/>
            <person name="Tiedje J.M."/>
            <person name="Richardson P."/>
        </authorList>
    </citation>
    <scope>NUCLEOTIDE SEQUENCE [LARGE SCALE GENOMIC DNA]</scope>
    <source>
        <strain>HI2424</strain>
    </source>
</reference>
<protein>
    <recommendedName>
        <fullName evidence="1">Peptidyl-tRNA hydrolase</fullName>
        <shortName evidence="1">Pth</shortName>
        <ecNumber evidence="1">3.1.1.29</ecNumber>
    </recommendedName>
</protein>
<dbReference type="EC" id="3.1.1.29" evidence="1"/>
<dbReference type="EMBL" id="CP000458">
    <property type="protein sequence ID" value="ABK09554.1"/>
    <property type="molecule type" value="Genomic_DNA"/>
</dbReference>
<dbReference type="RefSeq" id="WP_011546249.1">
    <property type="nucleotide sequence ID" value="NC_008542.1"/>
</dbReference>
<dbReference type="SMR" id="A0KAM7"/>
<dbReference type="KEGG" id="bch:Bcen2424_2804"/>
<dbReference type="HOGENOM" id="CLU_062456_3_1_4"/>
<dbReference type="GO" id="GO:0005737">
    <property type="term" value="C:cytoplasm"/>
    <property type="evidence" value="ECO:0007669"/>
    <property type="project" value="UniProtKB-SubCell"/>
</dbReference>
<dbReference type="GO" id="GO:0004045">
    <property type="term" value="F:peptidyl-tRNA hydrolase activity"/>
    <property type="evidence" value="ECO:0007669"/>
    <property type="project" value="UniProtKB-UniRule"/>
</dbReference>
<dbReference type="GO" id="GO:0000049">
    <property type="term" value="F:tRNA binding"/>
    <property type="evidence" value="ECO:0007669"/>
    <property type="project" value="UniProtKB-UniRule"/>
</dbReference>
<dbReference type="GO" id="GO:0006515">
    <property type="term" value="P:protein quality control for misfolded or incompletely synthesized proteins"/>
    <property type="evidence" value="ECO:0007669"/>
    <property type="project" value="UniProtKB-UniRule"/>
</dbReference>
<dbReference type="GO" id="GO:0072344">
    <property type="term" value="P:rescue of stalled ribosome"/>
    <property type="evidence" value="ECO:0007669"/>
    <property type="project" value="UniProtKB-UniRule"/>
</dbReference>
<dbReference type="CDD" id="cd00462">
    <property type="entry name" value="PTH"/>
    <property type="match status" value="1"/>
</dbReference>
<dbReference type="FunFam" id="3.40.50.1470:FF:000001">
    <property type="entry name" value="Peptidyl-tRNA hydrolase"/>
    <property type="match status" value="1"/>
</dbReference>
<dbReference type="Gene3D" id="3.40.50.1470">
    <property type="entry name" value="Peptidyl-tRNA hydrolase"/>
    <property type="match status" value="1"/>
</dbReference>
<dbReference type="HAMAP" id="MF_00083">
    <property type="entry name" value="Pept_tRNA_hydro_bact"/>
    <property type="match status" value="1"/>
</dbReference>
<dbReference type="InterPro" id="IPR001328">
    <property type="entry name" value="Pept_tRNA_hydro"/>
</dbReference>
<dbReference type="InterPro" id="IPR018171">
    <property type="entry name" value="Pept_tRNA_hydro_CS"/>
</dbReference>
<dbReference type="InterPro" id="IPR036416">
    <property type="entry name" value="Pept_tRNA_hydro_sf"/>
</dbReference>
<dbReference type="NCBIfam" id="TIGR00447">
    <property type="entry name" value="pth"/>
    <property type="match status" value="1"/>
</dbReference>
<dbReference type="PANTHER" id="PTHR17224">
    <property type="entry name" value="PEPTIDYL-TRNA HYDROLASE"/>
    <property type="match status" value="1"/>
</dbReference>
<dbReference type="PANTHER" id="PTHR17224:SF1">
    <property type="entry name" value="PEPTIDYL-TRNA HYDROLASE"/>
    <property type="match status" value="1"/>
</dbReference>
<dbReference type="Pfam" id="PF01195">
    <property type="entry name" value="Pept_tRNA_hydro"/>
    <property type="match status" value="1"/>
</dbReference>
<dbReference type="SUPFAM" id="SSF53178">
    <property type="entry name" value="Peptidyl-tRNA hydrolase-like"/>
    <property type="match status" value="1"/>
</dbReference>
<dbReference type="PROSITE" id="PS01195">
    <property type="entry name" value="PEPT_TRNA_HYDROL_1"/>
    <property type="match status" value="1"/>
</dbReference>
<dbReference type="PROSITE" id="PS01196">
    <property type="entry name" value="PEPT_TRNA_HYDROL_2"/>
    <property type="match status" value="1"/>
</dbReference>
<organism>
    <name type="scientific">Burkholderia cenocepacia (strain HI2424)</name>
    <dbReference type="NCBI Taxonomy" id="331272"/>
    <lineage>
        <taxon>Bacteria</taxon>
        <taxon>Pseudomonadati</taxon>
        <taxon>Pseudomonadota</taxon>
        <taxon>Betaproteobacteria</taxon>
        <taxon>Burkholderiales</taxon>
        <taxon>Burkholderiaceae</taxon>
        <taxon>Burkholderia</taxon>
        <taxon>Burkholderia cepacia complex</taxon>
    </lineage>
</organism>
<feature type="chain" id="PRO_1000010569" description="Peptidyl-tRNA hydrolase">
    <location>
        <begin position="1"/>
        <end position="199"/>
    </location>
</feature>
<feature type="active site" description="Proton acceptor" evidence="1">
    <location>
        <position position="20"/>
    </location>
</feature>
<feature type="binding site" evidence="1">
    <location>
        <position position="15"/>
    </location>
    <ligand>
        <name>tRNA</name>
        <dbReference type="ChEBI" id="CHEBI:17843"/>
    </ligand>
</feature>
<feature type="binding site" evidence="1">
    <location>
        <position position="66"/>
    </location>
    <ligand>
        <name>tRNA</name>
        <dbReference type="ChEBI" id="CHEBI:17843"/>
    </ligand>
</feature>
<feature type="binding site" evidence="1">
    <location>
        <position position="68"/>
    </location>
    <ligand>
        <name>tRNA</name>
        <dbReference type="ChEBI" id="CHEBI:17843"/>
    </ligand>
</feature>
<feature type="binding site" evidence="1">
    <location>
        <position position="114"/>
    </location>
    <ligand>
        <name>tRNA</name>
        <dbReference type="ChEBI" id="CHEBI:17843"/>
    </ligand>
</feature>
<feature type="site" description="Discriminates between blocked and unblocked aminoacyl-tRNA" evidence="1">
    <location>
        <position position="10"/>
    </location>
</feature>
<feature type="site" description="Stabilizes the basic form of H active site to accept a proton" evidence="1">
    <location>
        <position position="93"/>
    </location>
</feature>
<proteinExistence type="inferred from homology"/>
<name>PTH_BURCH</name>
<keyword id="KW-0963">Cytoplasm</keyword>
<keyword id="KW-0378">Hydrolase</keyword>
<keyword id="KW-0694">RNA-binding</keyword>
<keyword id="KW-0820">tRNA-binding</keyword>
<sequence length="199" mass="22070">MIKLIVGLGNPGAEYTATRHNAGFWLIDQLAREAGTTLRDERRFHGFYAKARLHGEEVHLLEPQTYMNRSGQSVVALAQFFKILPDQILVAHDELDLPPGTVKLKLGGGSGGHNGLKDITAHLSSQQYWRLRIGIGHPRDLISESARAGAKPDVANFVLKPPRREEQDVIDASIERALAVMPMVVKGELDRATMQLHRN</sequence>
<accession>A0KAM7</accession>